<keyword id="KW-0378">Hydrolase</keyword>
<gene>
    <name evidence="1" type="primary">rutD</name>
    <name type="ordered locus">Ctu_15900</name>
</gene>
<comment type="function">
    <text evidence="1">Involved in pyrimidine catabolism. May facilitate the hydrolysis of carbamate, a reaction that can also occur spontaneously.</text>
</comment>
<comment type="catalytic activity">
    <reaction evidence="1">
        <text>carbamate + 2 H(+) = NH4(+) + CO2</text>
        <dbReference type="Rhea" id="RHEA:15649"/>
        <dbReference type="ChEBI" id="CHEBI:13941"/>
        <dbReference type="ChEBI" id="CHEBI:15378"/>
        <dbReference type="ChEBI" id="CHEBI:16526"/>
        <dbReference type="ChEBI" id="CHEBI:28938"/>
    </reaction>
</comment>
<comment type="similarity">
    <text evidence="1">Belongs to the AB hydrolase superfamily. Hydrolase RutD family.</text>
</comment>
<sequence>MKLRISDAPFPGAPVMVMISGLGGLGGYWLAQQNALSQAYQVVVYDQRGTGDNADTLPEGYTLTDMAQELHRALALHGVQRYAVLGHALGGLVGLELALAYPRAVSALVIINGWLSLGTWTRRCFDARERLLLDSGPAVYVAAQPLFLYPPQWAQENQPRLEAEEALQNAHFQGTENLLRRLWALKTADYRERAARVTTPVQLICARDDVLVPWTCSQALHEALPHSRLDVMTSGGHACNVTAPQRFNSLLYAGLAALTPAPHKETV</sequence>
<feature type="chain" id="PRO_0000402932" description="Putative carbamate hydrolase RutD">
    <location>
        <begin position="1"/>
        <end position="267"/>
    </location>
</feature>
<feature type="domain" description="AB hydrolase-1" evidence="1">
    <location>
        <begin position="14"/>
        <end position="115"/>
    </location>
</feature>
<organism>
    <name type="scientific">Cronobacter turicensis (strain DSM 18703 / CCUG 55852 / LMG 23827 / z3032)</name>
    <dbReference type="NCBI Taxonomy" id="693216"/>
    <lineage>
        <taxon>Bacteria</taxon>
        <taxon>Pseudomonadati</taxon>
        <taxon>Pseudomonadota</taxon>
        <taxon>Gammaproteobacteria</taxon>
        <taxon>Enterobacterales</taxon>
        <taxon>Enterobacteriaceae</taxon>
        <taxon>Cronobacter</taxon>
    </lineage>
</organism>
<dbReference type="EC" id="3.5.1.-" evidence="1"/>
<dbReference type="EMBL" id="FN543093">
    <property type="protein sequence ID" value="CBA29791.1"/>
    <property type="molecule type" value="Genomic_DNA"/>
</dbReference>
<dbReference type="SMR" id="C9Y0S4"/>
<dbReference type="ESTHER" id="crotz-rutd">
    <property type="family name" value="RutD"/>
</dbReference>
<dbReference type="KEGG" id="ctu:CTU_15900"/>
<dbReference type="PATRIC" id="fig|693216.3.peg.1515"/>
<dbReference type="HOGENOM" id="CLU_020336_50_1_6"/>
<dbReference type="Proteomes" id="UP000002069">
    <property type="component" value="Chromosome"/>
</dbReference>
<dbReference type="GO" id="GO:0016811">
    <property type="term" value="F:hydrolase activity, acting on carbon-nitrogen (but not peptide) bonds, in linear amides"/>
    <property type="evidence" value="ECO:0007669"/>
    <property type="project" value="InterPro"/>
</dbReference>
<dbReference type="GO" id="GO:0019740">
    <property type="term" value="P:nitrogen utilization"/>
    <property type="evidence" value="ECO:0007669"/>
    <property type="project" value="UniProtKB-UniRule"/>
</dbReference>
<dbReference type="GO" id="GO:0006212">
    <property type="term" value="P:uracil catabolic process"/>
    <property type="evidence" value="ECO:0007669"/>
    <property type="project" value="UniProtKB-UniRule"/>
</dbReference>
<dbReference type="Gene3D" id="3.40.50.1820">
    <property type="entry name" value="alpha/beta hydrolase"/>
    <property type="match status" value="1"/>
</dbReference>
<dbReference type="HAMAP" id="MF_00832">
    <property type="entry name" value="RutD"/>
    <property type="match status" value="1"/>
</dbReference>
<dbReference type="InterPro" id="IPR000073">
    <property type="entry name" value="AB_hydrolase_1"/>
</dbReference>
<dbReference type="InterPro" id="IPR029058">
    <property type="entry name" value="AB_hydrolase_fold"/>
</dbReference>
<dbReference type="InterPro" id="IPR050266">
    <property type="entry name" value="AB_hydrolase_sf"/>
</dbReference>
<dbReference type="InterPro" id="IPR019913">
    <property type="entry name" value="Pyrimidine_utilisation_RutD"/>
</dbReference>
<dbReference type="NCBIfam" id="TIGR03611">
    <property type="entry name" value="RutD"/>
    <property type="match status" value="1"/>
</dbReference>
<dbReference type="PANTHER" id="PTHR43798">
    <property type="entry name" value="MONOACYLGLYCEROL LIPASE"/>
    <property type="match status" value="1"/>
</dbReference>
<dbReference type="Pfam" id="PF00561">
    <property type="entry name" value="Abhydrolase_1"/>
    <property type="match status" value="1"/>
</dbReference>
<dbReference type="PRINTS" id="PR00111">
    <property type="entry name" value="ABHYDROLASE"/>
</dbReference>
<dbReference type="SUPFAM" id="SSF53474">
    <property type="entry name" value="alpha/beta-Hydrolases"/>
    <property type="match status" value="1"/>
</dbReference>
<evidence type="ECO:0000255" key="1">
    <source>
        <dbReference type="HAMAP-Rule" id="MF_00832"/>
    </source>
</evidence>
<name>RUTD_CROTZ</name>
<protein>
    <recommendedName>
        <fullName evidence="1">Putative carbamate hydrolase RutD</fullName>
        <ecNumber evidence="1">3.5.1.-</ecNumber>
    </recommendedName>
    <alternativeName>
        <fullName evidence="1">Aminohydrolase</fullName>
    </alternativeName>
</protein>
<accession>C9Y0S4</accession>
<proteinExistence type="inferred from homology"/>
<reference key="1">
    <citation type="journal article" date="2011" name="J. Bacteriol.">
        <title>Complete genome sequence of Cronobacter turicensis LMG 23827, a food-borne pathogen causing deaths in neonates.</title>
        <authorList>
            <person name="Stephan R."/>
            <person name="Lehner A."/>
            <person name="Tischler P."/>
            <person name="Rattei T."/>
        </authorList>
    </citation>
    <scope>NUCLEOTIDE SEQUENCE [LARGE SCALE GENOMIC DNA]</scope>
    <source>
        <strain>DSM 18703 / CCUG 55852 / LMG 23827 / z3032</strain>
    </source>
</reference>